<protein>
    <recommendedName>
        <fullName evidence="1">Lipoyl synthase</fullName>
        <ecNumber evidence="1">2.8.1.8</ecNumber>
    </recommendedName>
    <alternativeName>
        <fullName evidence="1">Lip-syn</fullName>
        <shortName evidence="1">LS</shortName>
    </alternativeName>
    <alternativeName>
        <fullName evidence="1">Lipoate synthase</fullName>
    </alternativeName>
    <alternativeName>
        <fullName evidence="1">Lipoic acid synthase</fullName>
    </alternativeName>
    <alternativeName>
        <fullName evidence="1">Sulfur insertion protein LipA</fullName>
    </alternativeName>
</protein>
<organism>
    <name type="scientific">Bacteroides fragilis (strain YCH46)</name>
    <dbReference type="NCBI Taxonomy" id="295405"/>
    <lineage>
        <taxon>Bacteria</taxon>
        <taxon>Pseudomonadati</taxon>
        <taxon>Bacteroidota</taxon>
        <taxon>Bacteroidia</taxon>
        <taxon>Bacteroidales</taxon>
        <taxon>Bacteroidaceae</taxon>
        <taxon>Bacteroides</taxon>
    </lineage>
</organism>
<gene>
    <name evidence="1" type="primary">lipA</name>
    <name type="ordered locus">BF0976</name>
</gene>
<proteinExistence type="inferred from homology"/>
<feature type="chain" id="PRO_0000325233" description="Lipoyl synthase">
    <location>
        <begin position="1"/>
        <end position="288"/>
    </location>
</feature>
<feature type="domain" description="Radical SAM core" evidence="2">
    <location>
        <begin position="51"/>
        <end position="265"/>
    </location>
</feature>
<feature type="binding site" evidence="1">
    <location>
        <position position="39"/>
    </location>
    <ligand>
        <name>[4Fe-4S] cluster</name>
        <dbReference type="ChEBI" id="CHEBI:49883"/>
        <label>1</label>
    </ligand>
</feature>
<feature type="binding site" evidence="1">
    <location>
        <position position="44"/>
    </location>
    <ligand>
        <name>[4Fe-4S] cluster</name>
        <dbReference type="ChEBI" id="CHEBI:49883"/>
        <label>1</label>
    </ligand>
</feature>
<feature type="binding site" evidence="1">
    <location>
        <position position="50"/>
    </location>
    <ligand>
        <name>[4Fe-4S] cluster</name>
        <dbReference type="ChEBI" id="CHEBI:49883"/>
        <label>1</label>
    </ligand>
</feature>
<feature type="binding site" evidence="1">
    <location>
        <position position="65"/>
    </location>
    <ligand>
        <name>[4Fe-4S] cluster</name>
        <dbReference type="ChEBI" id="CHEBI:49883"/>
        <label>2</label>
        <note>4Fe-4S-S-AdoMet</note>
    </ligand>
</feature>
<feature type="binding site" evidence="1">
    <location>
        <position position="69"/>
    </location>
    <ligand>
        <name>[4Fe-4S] cluster</name>
        <dbReference type="ChEBI" id="CHEBI:49883"/>
        <label>2</label>
        <note>4Fe-4S-S-AdoMet</note>
    </ligand>
</feature>
<feature type="binding site" evidence="1">
    <location>
        <position position="72"/>
    </location>
    <ligand>
        <name>[4Fe-4S] cluster</name>
        <dbReference type="ChEBI" id="CHEBI:49883"/>
        <label>2</label>
        <note>4Fe-4S-S-AdoMet</note>
    </ligand>
</feature>
<feature type="binding site" evidence="1">
    <location>
        <position position="276"/>
    </location>
    <ligand>
        <name>[4Fe-4S] cluster</name>
        <dbReference type="ChEBI" id="CHEBI:49883"/>
        <label>1</label>
    </ligand>
</feature>
<name>LIPA_BACFR</name>
<comment type="function">
    <text evidence="1">Catalyzes the radical-mediated insertion of two sulfur atoms into the C-6 and C-8 positions of the octanoyl moiety bound to the lipoyl domains of lipoate-dependent enzymes, thereby converting the octanoylated domains into lipoylated derivatives.</text>
</comment>
<comment type="catalytic activity">
    <reaction evidence="1">
        <text>[[Fe-S] cluster scaffold protein carrying a second [4Fe-4S](2+) cluster] + N(6)-octanoyl-L-lysyl-[protein] + 2 oxidized [2Fe-2S]-[ferredoxin] + 2 S-adenosyl-L-methionine + 4 H(+) = [[Fe-S] cluster scaffold protein] + N(6)-[(R)-dihydrolipoyl]-L-lysyl-[protein] + 4 Fe(3+) + 2 hydrogen sulfide + 2 5'-deoxyadenosine + 2 L-methionine + 2 reduced [2Fe-2S]-[ferredoxin]</text>
        <dbReference type="Rhea" id="RHEA:16585"/>
        <dbReference type="Rhea" id="RHEA-COMP:9928"/>
        <dbReference type="Rhea" id="RHEA-COMP:10000"/>
        <dbReference type="Rhea" id="RHEA-COMP:10001"/>
        <dbReference type="Rhea" id="RHEA-COMP:10475"/>
        <dbReference type="Rhea" id="RHEA-COMP:14568"/>
        <dbReference type="Rhea" id="RHEA-COMP:14569"/>
        <dbReference type="ChEBI" id="CHEBI:15378"/>
        <dbReference type="ChEBI" id="CHEBI:17319"/>
        <dbReference type="ChEBI" id="CHEBI:29034"/>
        <dbReference type="ChEBI" id="CHEBI:29919"/>
        <dbReference type="ChEBI" id="CHEBI:33722"/>
        <dbReference type="ChEBI" id="CHEBI:33737"/>
        <dbReference type="ChEBI" id="CHEBI:33738"/>
        <dbReference type="ChEBI" id="CHEBI:57844"/>
        <dbReference type="ChEBI" id="CHEBI:59789"/>
        <dbReference type="ChEBI" id="CHEBI:78809"/>
        <dbReference type="ChEBI" id="CHEBI:83100"/>
        <dbReference type="EC" id="2.8.1.8"/>
    </reaction>
</comment>
<comment type="cofactor">
    <cofactor evidence="1">
        <name>[4Fe-4S] cluster</name>
        <dbReference type="ChEBI" id="CHEBI:49883"/>
    </cofactor>
    <text evidence="1">Binds 2 [4Fe-4S] clusters per subunit. One cluster is coordinated with 3 cysteines and an exchangeable S-adenosyl-L-methionine.</text>
</comment>
<comment type="pathway">
    <text evidence="1">Protein modification; protein lipoylation via endogenous pathway; protein N(6)-(lipoyl)lysine from octanoyl-[acyl-carrier-protein]: step 2/2.</text>
</comment>
<comment type="subcellular location">
    <subcellularLocation>
        <location evidence="1">Cytoplasm</location>
    </subcellularLocation>
</comment>
<comment type="similarity">
    <text evidence="1">Belongs to the radical SAM superfamily. Lipoyl synthase family.</text>
</comment>
<sequence>MGNDKRVRKPEWLKISIGANERYTETKRIVESHCLHTICSSGRCPNMGECWGKGTATFMIAGDICTRSCKFCNTQTGRPLPLDPDEPAHVAESIALMKLSHAVITSVDRDDLPDLGAAHWAQTIREIKRLNPETTTEVLIPDFQGRKELIDQVIKACPEIISHNMETVKRISPQVRSAANYHTSLEVIRQIAESGITAKSGIMVGLGETPAEVEELMDDLISVGCKILTIGQYLQPTHKHFPVAAYITPEQFAVYKETGLKKGFEQVESAPLVRSSYHAEKHIRFNNK</sequence>
<evidence type="ECO:0000255" key="1">
    <source>
        <dbReference type="HAMAP-Rule" id="MF_00206"/>
    </source>
</evidence>
<evidence type="ECO:0000255" key="2">
    <source>
        <dbReference type="PROSITE-ProRule" id="PRU01266"/>
    </source>
</evidence>
<reference key="1">
    <citation type="journal article" date="2004" name="Proc. Natl. Acad. Sci. U.S.A.">
        <title>Genomic analysis of Bacteroides fragilis reveals extensive DNA inversions regulating cell surface adaptation.</title>
        <authorList>
            <person name="Kuwahara T."/>
            <person name="Yamashita A."/>
            <person name="Hirakawa H."/>
            <person name="Nakayama H."/>
            <person name="Toh H."/>
            <person name="Okada N."/>
            <person name="Kuhara S."/>
            <person name="Hattori M."/>
            <person name="Hayashi T."/>
            <person name="Ohnishi Y."/>
        </authorList>
    </citation>
    <scope>NUCLEOTIDE SEQUENCE [LARGE SCALE GENOMIC DNA]</scope>
    <source>
        <strain>YCH46</strain>
    </source>
</reference>
<keyword id="KW-0004">4Fe-4S</keyword>
<keyword id="KW-0963">Cytoplasm</keyword>
<keyword id="KW-0408">Iron</keyword>
<keyword id="KW-0411">Iron-sulfur</keyword>
<keyword id="KW-0479">Metal-binding</keyword>
<keyword id="KW-0949">S-adenosyl-L-methionine</keyword>
<keyword id="KW-0808">Transferase</keyword>
<dbReference type="EC" id="2.8.1.8" evidence="1"/>
<dbReference type="EMBL" id="AP006841">
    <property type="protein sequence ID" value="BAD47726.1"/>
    <property type="molecule type" value="Genomic_DNA"/>
</dbReference>
<dbReference type="RefSeq" id="WP_008767975.1">
    <property type="nucleotide sequence ID" value="NC_006347.1"/>
</dbReference>
<dbReference type="RefSeq" id="YP_098260.1">
    <property type="nucleotide sequence ID" value="NC_006347.1"/>
</dbReference>
<dbReference type="SMR" id="Q64XQ0"/>
<dbReference type="STRING" id="295405.BF0976"/>
<dbReference type="KEGG" id="bfr:BF0976"/>
<dbReference type="PATRIC" id="fig|295405.11.peg.976"/>
<dbReference type="HOGENOM" id="CLU_033144_2_1_10"/>
<dbReference type="OrthoDB" id="9787898at2"/>
<dbReference type="UniPathway" id="UPA00538">
    <property type="reaction ID" value="UER00593"/>
</dbReference>
<dbReference type="Proteomes" id="UP000002197">
    <property type="component" value="Chromosome"/>
</dbReference>
<dbReference type="GO" id="GO:0005737">
    <property type="term" value="C:cytoplasm"/>
    <property type="evidence" value="ECO:0007669"/>
    <property type="project" value="UniProtKB-SubCell"/>
</dbReference>
<dbReference type="GO" id="GO:0051539">
    <property type="term" value="F:4 iron, 4 sulfur cluster binding"/>
    <property type="evidence" value="ECO:0007669"/>
    <property type="project" value="UniProtKB-UniRule"/>
</dbReference>
<dbReference type="GO" id="GO:0016992">
    <property type="term" value="F:lipoate synthase activity"/>
    <property type="evidence" value="ECO:0007669"/>
    <property type="project" value="UniProtKB-UniRule"/>
</dbReference>
<dbReference type="GO" id="GO:0046872">
    <property type="term" value="F:metal ion binding"/>
    <property type="evidence" value="ECO:0007669"/>
    <property type="project" value="UniProtKB-KW"/>
</dbReference>
<dbReference type="CDD" id="cd01335">
    <property type="entry name" value="Radical_SAM"/>
    <property type="match status" value="1"/>
</dbReference>
<dbReference type="FunFam" id="3.20.20.70:FF:000040">
    <property type="entry name" value="Lipoyl synthase"/>
    <property type="match status" value="1"/>
</dbReference>
<dbReference type="Gene3D" id="3.20.20.70">
    <property type="entry name" value="Aldolase class I"/>
    <property type="match status" value="1"/>
</dbReference>
<dbReference type="HAMAP" id="MF_00206">
    <property type="entry name" value="Lipoyl_synth"/>
    <property type="match status" value="1"/>
</dbReference>
<dbReference type="InterPro" id="IPR013785">
    <property type="entry name" value="Aldolase_TIM"/>
</dbReference>
<dbReference type="InterPro" id="IPR006638">
    <property type="entry name" value="Elp3/MiaA/NifB-like_rSAM"/>
</dbReference>
<dbReference type="InterPro" id="IPR003698">
    <property type="entry name" value="Lipoyl_synth"/>
</dbReference>
<dbReference type="InterPro" id="IPR007197">
    <property type="entry name" value="rSAM"/>
</dbReference>
<dbReference type="NCBIfam" id="TIGR00510">
    <property type="entry name" value="lipA"/>
    <property type="match status" value="1"/>
</dbReference>
<dbReference type="NCBIfam" id="NF004019">
    <property type="entry name" value="PRK05481.1"/>
    <property type="match status" value="1"/>
</dbReference>
<dbReference type="NCBIfam" id="NF009544">
    <property type="entry name" value="PRK12928.1"/>
    <property type="match status" value="1"/>
</dbReference>
<dbReference type="PANTHER" id="PTHR10949">
    <property type="entry name" value="LIPOYL SYNTHASE"/>
    <property type="match status" value="1"/>
</dbReference>
<dbReference type="PANTHER" id="PTHR10949:SF0">
    <property type="entry name" value="LIPOYL SYNTHASE, MITOCHONDRIAL"/>
    <property type="match status" value="1"/>
</dbReference>
<dbReference type="Pfam" id="PF04055">
    <property type="entry name" value="Radical_SAM"/>
    <property type="match status" value="1"/>
</dbReference>
<dbReference type="PIRSF" id="PIRSF005963">
    <property type="entry name" value="Lipoyl_synth"/>
    <property type="match status" value="1"/>
</dbReference>
<dbReference type="SFLD" id="SFLDF00271">
    <property type="entry name" value="lipoyl_synthase"/>
    <property type="match status" value="1"/>
</dbReference>
<dbReference type="SFLD" id="SFLDG01058">
    <property type="entry name" value="lipoyl_synthase_like"/>
    <property type="match status" value="1"/>
</dbReference>
<dbReference type="SMART" id="SM00729">
    <property type="entry name" value="Elp3"/>
    <property type="match status" value="1"/>
</dbReference>
<dbReference type="SUPFAM" id="SSF102114">
    <property type="entry name" value="Radical SAM enzymes"/>
    <property type="match status" value="1"/>
</dbReference>
<dbReference type="PROSITE" id="PS51918">
    <property type="entry name" value="RADICAL_SAM"/>
    <property type="match status" value="1"/>
</dbReference>
<accession>Q64XQ0</accession>